<comment type="function">
    <text evidence="1">Catalytic subunit of H/ACA small nucleolar ribonucleoprotein (H/ACA snoRNP) complex, which catalyzes pseudouridylation of rRNA. This involves the isomerization of uridine such that the ribose is subsequently attached to C5, instead of the normal N1. Pseudouridine ('psi') residues may serve to stabilize the conformation of rRNAs and play a central role in ribosomal RNA processing. The H/ACA snoRNP complex also mediates pseudouridylation of other types of RNAs. Catalyzes pseudouridylation at position 93 in U2 snRNA. Also catalyzes pseudouridylation of mRNAs; H/ACA-type snoRNAs probably guide pseudouridylation of mRNAs.</text>
</comment>
<comment type="catalytic activity">
    <reaction evidence="1">
        <text>uridine in 5S rRNA = pseudouridine in 5S rRNA</text>
        <dbReference type="Rhea" id="RHEA:47036"/>
        <dbReference type="Rhea" id="RHEA-COMP:11730"/>
        <dbReference type="Rhea" id="RHEA-COMP:11731"/>
        <dbReference type="ChEBI" id="CHEBI:65314"/>
        <dbReference type="ChEBI" id="CHEBI:65315"/>
    </reaction>
</comment>
<comment type="catalytic activity">
    <reaction evidence="1">
        <text>uridine in snRNA = pseudouridine in snRNA</text>
        <dbReference type="Rhea" id="RHEA:51124"/>
        <dbReference type="Rhea" id="RHEA-COMP:12891"/>
        <dbReference type="Rhea" id="RHEA-COMP:12892"/>
        <dbReference type="ChEBI" id="CHEBI:65314"/>
        <dbReference type="ChEBI" id="CHEBI:65315"/>
    </reaction>
</comment>
<comment type="catalytic activity">
    <reaction evidence="1">
        <text>a uridine in mRNA = a pseudouridine in mRNA</text>
        <dbReference type="Rhea" id="RHEA:56644"/>
        <dbReference type="Rhea" id="RHEA-COMP:14658"/>
        <dbReference type="Rhea" id="RHEA-COMP:14659"/>
        <dbReference type="ChEBI" id="CHEBI:65314"/>
        <dbReference type="ChEBI" id="CHEBI:65315"/>
    </reaction>
</comment>
<comment type="subunit">
    <text evidence="1">Component of the small nucleolar ribonucleoprotein particles containing H/ACA-type snoRNAs (H/ACA snoRNPs).</text>
</comment>
<comment type="subcellular location">
    <subcellularLocation>
        <location evidence="1">Nucleus</location>
        <location evidence="1">Nucleolus</location>
    </subcellularLocation>
</comment>
<comment type="similarity">
    <text evidence="5">Belongs to the pseudouridine synthase TruB family.</text>
</comment>
<keyword id="KW-0238">DNA-binding</keyword>
<keyword id="KW-0413">Isomerase</keyword>
<keyword id="KW-0493">Microtubule</keyword>
<keyword id="KW-0539">Nucleus</keyword>
<keyword id="KW-1185">Reference proteome</keyword>
<keyword id="KW-0677">Repeat</keyword>
<keyword id="KW-0687">Ribonucleoprotein</keyword>
<keyword id="KW-0690">Ribosome biogenesis</keyword>
<keyword id="KW-0694">RNA-binding</keyword>
<keyword id="KW-0698">rRNA processing</keyword>
<sequence>MSDEFVIKPESVSPSSNTSEWPLLLKDYDKLLVRSGHYTPIPAGASPLKRDLKSYISSGVINLDKPSNPSSHEVVAWIKRILRCEKTGHSGTLDPKVTGCLIVCVDRATRLVKSQQGAGKEYVCIVRLHDALKDEKELGRGLENLTGALFQRPPLISAVKRQLRVRTIYDSNLIEFDNKRNLGVFWASCEAGTYMRTLCVHLGMLLGVGGHMQELRRVRSGALSENDNLVTLHDVMDAQWVYDNTRDESYLRKIIQPLETLLVGYKRIVVKDSAVNAVCYGAKLMIPGLLRYEEGIELYDEVVLITTKGEAIAVAIAQMSTVDLATCDHGVVAKVKRCIMERDLYPRRWGLGPIAQKKKQMKADGKLDKYGRANENTPETWKKTYVSLENAEPTTAPASKSEEKPLIKEVEKKEVEQKEESKEESKTPEEKKDKKEKKEKKDKKEKKEKKEKKEKKRKADDDESSEKKKKKSKK</sequence>
<protein>
    <recommendedName>
        <fullName evidence="5">H/ACA ribonucleoprotein complex subunit CBF5</fullName>
        <ecNumber evidence="1">5.4.99.-</ecNumber>
    </recommendedName>
    <alternativeName>
        <fullName>Centromere-binding factor 5</fullName>
    </alternativeName>
    <alternativeName>
        <fullName>H/ACA snoRNP protein CBF5</fullName>
    </alternativeName>
    <alternativeName>
        <fullName>Small nucleolar RNP protein CBF5</fullName>
    </alternativeName>
</protein>
<name>CBF5_KLULA</name>
<feature type="chain" id="PRO_0000121980" description="H/ACA ribonucleoprotein complex subunit CBF5">
    <location>
        <begin position="1"/>
        <end position="474"/>
    </location>
</feature>
<feature type="domain" description="PUA" evidence="3">
    <location>
        <begin position="265"/>
        <end position="340"/>
    </location>
</feature>
<feature type="repeat" description="1">
    <location>
        <begin position="431"/>
        <end position="433"/>
    </location>
</feature>
<feature type="repeat" description="2">
    <location>
        <begin position="434"/>
        <end position="436"/>
    </location>
</feature>
<feature type="repeat" description="3">
    <location>
        <begin position="437"/>
        <end position="439"/>
    </location>
</feature>
<feature type="repeat" description="4">
    <location>
        <begin position="440"/>
        <end position="442"/>
    </location>
</feature>
<feature type="repeat" description="5">
    <location>
        <begin position="443"/>
        <end position="445"/>
    </location>
</feature>
<feature type="repeat" description="6">
    <location>
        <begin position="446"/>
        <end position="448"/>
    </location>
</feature>
<feature type="repeat" description="7">
    <location>
        <begin position="449"/>
        <end position="451"/>
    </location>
</feature>
<feature type="repeat" description="8">
    <location>
        <begin position="452"/>
        <end position="454"/>
    </location>
</feature>
<feature type="repeat" description="9">
    <location>
        <begin position="455"/>
        <end position="457"/>
    </location>
</feature>
<feature type="region of interest" description="Disordered" evidence="4">
    <location>
        <begin position="356"/>
        <end position="375"/>
    </location>
</feature>
<feature type="region of interest" description="Disordered" evidence="4">
    <location>
        <begin position="390"/>
        <end position="474"/>
    </location>
</feature>
<feature type="region of interest" description="9 X 3 AA tandem repeats of K-K-[DE]">
    <location>
        <begin position="431"/>
        <end position="460"/>
    </location>
</feature>
<feature type="compositionally biased region" description="Basic and acidic residues" evidence="4">
    <location>
        <begin position="361"/>
        <end position="372"/>
    </location>
</feature>
<feature type="compositionally biased region" description="Basic and acidic residues" evidence="4">
    <location>
        <begin position="400"/>
        <end position="433"/>
    </location>
</feature>
<feature type="compositionally biased region" description="Basic residues" evidence="4">
    <location>
        <begin position="434"/>
        <end position="456"/>
    </location>
</feature>
<feature type="active site" description="Nucleophile" evidence="2">
    <location>
        <position position="94"/>
    </location>
</feature>
<dbReference type="EC" id="5.4.99.-" evidence="1"/>
<dbReference type="EMBL" id="AF008563">
    <property type="protein sequence ID" value="AAC64862.1"/>
    <property type="molecule type" value="Genomic_DNA"/>
</dbReference>
<dbReference type="EMBL" id="CR382124">
    <property type="protein sequence ID" value="CAH00369.1"/>
    <property type="molecule type" value="Genomic_DNA"/>
</dbReference>
<dbReference type="RefSeq" id="XP_453273.1">
    <property type="nucleotide sequence ID" value="XM_453273.1"/>
</dbReference>
<dbReference type="SMR" id="O13473"/>
<dbReference type="FunCoup" id="O13473">
    <property type="interactions" value="1696"/>
</dbReference>
<dbReference type="STRING" id="284590.O13473"/>
<dbReference type="PaxDb" id="284590-O13473"/>
<dbReference type="KEGG" id="kla:KLLA0_D04796g"/>
<dbReference type="eggNOG" id="KOG2529">
    <property type="taxonomic scope" value="Eukaryota"/>
</dbReference>
<dbReference type="HOGENOM" id="CLU_032087_3_2_1"/>
<dbReference type="InParanoid" id="O13473"/>
<dbReference type="OMA" id="KYGRTNE"/>
<dbReference type="Proteomes" id="UP000000598">
    <property type="component" value="Chromosome D"/>
</dbReference>
<dbReference type="GO" id="GO:0031429">
    <property type="term" value="C:box H/ACA snoRNP complex"/>
    <property type="evidence" value="ECO:0007669"/>
    <property type="project" value="TreeGrafter"/>
</dbReference>
<dbReference type="GO" id="GO:0005874">
    <property type="term" value="C:microtubule"/>
    <property type="evidence" value="ECO:0007669"/>
    <property type="project" value="UniProtKB-KW"/>
</dbReference>
<dbReference type="GO" id="GO:0003677">
    <property type="term" value="F:DNA binding"/>
    <property type="evidence" value="ECO:0007669"/>
    <property type="project" value="UniProtKB-KW"/>
</dbReference>
<dbReference type="GO" id="GO:0003723">
    <property type="term" value="F:RNA binding"/>
    <property type="evidence" value="ECO:0007669"/>
    <property type="project" value="UniProtKB-KW"/>
</dbReference>
<dbReference type="GO" id="GO:0106032">
    <property type="term" value="F:snRNA pseudouridine synthase activity"/>
    <property type="evidence" value="ECO:0007669"/>
    <property type="project" value="RHEA"/>
</dbReference>
<dbReference type="GO" id="GO:0000495">
    <property type="term" value="P:box H/ACA sno(s)RNA 3'-end processing"/>
    <property type="evidence" value="ECO:0007669"/>
    <property type="project" value="TreeGrafter"/>
</dbReference>
<dbReference type="GO" id="GO:1990481">
    <property type="term" value="P:mRNA pseudouridine synthesis"/>
    <property type="evidence" value="ECO:0007669"/>
    <property type="project" value="TreeGrafter"/>
</dbReference>
<dbReference type="GO" id="GO:0031118">
    <property type="term" value="P:rRNA pseudouridine synthesis"/>
    <property type="evidence" value="ECO:0007669"/>
    <property type="project" value="TreeGrafter"/>
</dbReference>
<dbReference type="GO" id="GO:0031120">
    <property type="term" value="P:snRNA pseudouridine synthesis"/>
    <property type="evidence" value="ECO:0007669"/>
    <property type="project" value="TreeGrafter"/>
</dbReference>
<dbReference type="CDD" id="cd02572">
    <property type="entry name" value="PseudoU_synth_hDyskerin"/>
    <property type="match status" value="1"/>
</dbReference>
<dbReference type="CDD" id="cd21148">
    <property type="entry name" value="PUA_Cbf5"/>
    <property type="match status" value="1"/>
</dbReference>
<dbReference type="FunFam" id="3.30.2350.10:FF:000001">
    <property type="entry name" value="H/ACA ribonucleoprotein complex subunit CBF5"/>
    <property type="match status" value="1"/>
</dbReference>
<dbReference type="Gene3D" id="3.30.2350.10">
    <property type="entry name" value="Pseudouridine synthase"/>
    <property type="match status" value="1"/>
</dbReference>
<dbReference type="Gene3D" id="2.30.130.10">
    <property type="entry name" value="PUA domain"/>
    <property type="match status" value="1"/>
</dbReference>
<dbReference type="InterPro" id="IPR012960">
    <property type="entry name" value="Dyskerin-like"/>
</dbReference>
<dbReference type="InterPro" id="IPR020103">
    <property type="entry name" value="PsdUridine_synth_cat_dom_sf"/>
</dbReference>
<dbReference type="InterPro" id="IPR002501">
    <property type="entry name" value="PsdUridine_synth_N"/>
</dbReference>
<dbReference type="InterPro" id="IPR002478">
    <property type="entry name" value="PUA"/>
</dbReference>
<dbReference type="InterPro" id="IPR015947">
    <property type="entry name" value="PUA-like_sf"/>
</dbReference>
<dbReference type="InterPro" id="IPR036974">
    <property type="entry name" value="PUA_sf"/>
</dbReference>
<dbReference type="InterPro" id="IPR004802">
    <property type="entry name" value="tRNA_PsdUridine_synth_B_fam"/>
</dbReference>
<dbReference type="InterPro" id="IPR032819">
    <property type="entry name" value="TruB_C"/>
</dbReference>
<dbReference type="InterPro" id="IPR004521">
    <property type="entry name" value="Uncharacterised_CHP00451"/>
</dbReference>
<dbReference type="NCBIfam" id="TIGR00425">
    <property type="entry name" value="CBF5"/>
    <property type="match status" value="1"/>
</dbReference>
<dbReference type="NCBIfam" id="NF003280">
    <property type="entry name" value="PRK04270.1"/>
    <property type="match status" value="1"/>
</dbReference>
<dbReference type="NCBIfam" id="TIGR00451">
    <property type="entry name" value="unchar_dom_2"/>
    <property type="match status" value="1"/>
</dbReference>
<dbReference type="PANTHER" id="PTHR23127">
    <property type="entry name" value="CENTROMERE/MICROTUBULE BINDING PROTEIN CBF5"/>
    <property type="match status" value="1"/>
</dbReference>
<dbReference type="PANTHER" id="PTHR23127:SF0">
    <property type="entry name" value="H_ACA RIBONUCLEOPROTEIN COMPLEX SUBUNIT DKC1"/>
    <property type="match status" value="1"/>
</dbReference>
<dbReference type="Pfam" id="PF08068">
    <property type="entry name" value="DKCLD"/>
    <property type="match status" value="1"/>
</dbReference>
<dbReference type="Pfam" id="PF01472">
    <property type="entry name" value="PUA"/>
    <property type="match status" value="1"/>
</dbReference>
<dbReference type="Pfam" id="PF16198">
    <property type="entry name" value="TruB_C_2"/>
    <property type="match status" value="1"/>
</dbReference>
<dbReference type="Pfam" id="PF01509">
    <property type="entry name" value="TruB_N"/>
    <property type="match status" value="1"/>
</dbReference>
<dbReference type="SMART" id="SM01136">
    <property type="entry name" value="DKCLD"/>
    <property type="match status" value="1"/>
</dbReference>
<dbReference type="SMART" id="SM00359">
    <property type="entry name" value="PUA"/>
    <property type="match status" value="1"/>
</dbReference>
<dbReference type="SUPFAM" id="SSF55120">
    <property type="entry name" value="Pseudouridine synthase"/>
    <property type="match status" value="1"/>
</dbReference>
<dbReference type="SUPFAM" id="SSF88697">
    <property type="entry name" value="PUA domain-like"/>
    <property type="match status" value="1"/>
</dbReference>
<dbReference type="PROSITE" id="PS50890">
    <property type="entry name" value="PUA"/>
    <property type="match status" value="1"/>
</dbReference>
<reference key="1">
    <citation type="journal article" date="1998" name="Yeast">
        <title>The lysine-rich C-terminal repeats of the centromere-binding factor 5 (Cbf5) of Kluyveromyces lactis are not essential for function.</title>
        <authorList>
            <person name="Winkler A.A."/>
            <person name="Bobok A."/>
            <person name="Zonneveld B.J.M."/>
            <person name="Steensma H.Y."/>
            <person name="Hooykaas P.J.J."/>
        </authorList>
    </citation>
    <scope>NUCLEOTIDE SEQUENCE [GENOMIC DNA]</scope>
    <source>
        <strain>ATCC MYA-539 / JBD100</strain>
    </source>
</reference>
<reference key="2">
    <citation type="journal article" date="2004" name="Nature">
        <title>Genome evolution in yeasts.</title>
        <authorList>
            <person name="Dujon B."/>
            <person name="Sherman D."/>
            <person name="Fischer G."/>
            <person name="Durrens P."/>
            <person name="Casaregola S."/>
            <person name="Lafontaine I."/>
            <person name="de Montigny J."/>
            <person name="Marck C."/>
            <person name="Neuveglise C."/>
            <person name="Talla E."/>
            <person name="Goffard N."/>
            <person name="Frangeul L."/>
            <person name="Aigle M."/>
            <person name="Anthouard V."/>
            <person name="Babour A."/>
            <person name="Barbe V."/>
            <person name="Barnay S."/>
            <person name="Blanchin S."/>
            <person name="Beckerich J.-M."/>
            <person name="Beyne E."/>
            <person name="Bleykasten C."/>
            <person name="Boisrame A."/>
            <person name="Boyer J."/>
            <person name="Cattolico L."/>
            <person name="Confanioleri F."/>
            <person name="de Daruvar A."/>
            <person name="Despons L."/>
            <person name="Fabre E."/>
            <person name="Fairhead C."/>
            <person name="Ferry-Dumazet H."/>
            <person name="Groppi A."/>
            <person name="Hantraye F."/>
            <person name="Hennequin C."/>
            <person name="Jauniaux N."/>
            <person name="Joyet P."/>
            <person name="Kachouri R."/>
            <person name="Kerrest A."/>
            <person name="Koszul R."/>
            <person name="Lemaire M."/>
            <person name="Lesur I."/>
            <person name="Ma L."/>
            <person name="Muller H."/>
            <person name="Nicaud J.-M."/>
            <person name="Nikolski M."/>
            <person name="Oztas S."/>
            <person name="Ozier-Kalogeropoulos O."/>
            <person name="Pellenz S."/>
            <person name="Potier S."/>
            <person name="Richard G.-F."/>
            <person name="Straub M.-L."/>
            <person name="Suleau A."/>
            <person name="Swennen D."/>
            <person name="Tekaia F."/>
            <person name="Wesolowski-Louvel M."/>
            <person name="Westhof E."/>
            <person name="Wirth B."/>
            <person name="Zeniou-Meyer M."/>
            <person name="Zivanovic Y."/>
            <person name="Bolotin-Fukuhara M."/>
            <person name="Thierry A."/>
            <person name="Bouchier C."/>
            <person name="Caudron B."/>
            <person name="Scarpelli C."/>
            <person name="Gaillardin C."/>
            <person name="Weissenbach J."/>
            <person name="Wincker P."/>
            <person name="Souciet J.-L."/>
        </authorList>
    </citation>
    <scope>NUCLEOTIDE SEQUENCE [LARGE SCALE GENOMIC DNA]</scope>
    <source>
        <strain>ATCC 8585 / CBS 2359 / DSM 70799 / NBRC 1267 / NRRL Y-1140 / WM37</strain>
    </source>
</reference>
<proteinExistence type="inferred from homology"/>
<organism>
    <name type="scientific">Kluyveromyces lactis (strain ATCC 8585 / CBS 2359 / DSM 70799 / NBRC 1267 / NRRL Y-1140 / WM37)</name>
    <name type="common">Yeast</name>
    <name type="synonym">Candida sphaerica</name>
    <dbReference type="NCBI Taxonomy" id="284590"/>
    <lineage>
        <taxon>Eukaryota</taxon>
        <taxon>Fungi</taxon>
        <taxon>Dikarya</taxon>
        <taxon>Ascomycota</taxon>
        <taxon>Saccharomycotina</taxon>
        <taxon>Saccharomycetes</taxon>
        <taxon>Saccharomycetales</taxon>
        <taxon>Saccharomycetaceae</taxon>
        <taxon>Kluyveromyces</taxon>
    </lineage>
</organism>
<evidence type="ECO:0000250" key="1">
    <source>
        <dbReference type="UniProtKB" id="P33322"/>
    </source>
</evidence>
<evidence type="ECO:0000250" key="2">
    <source>
        <dbReference type="UniProtKB" id="P60340"/>
    </source>
</evidence>
<evidence type="ECO:0000255" key="3">
    <source>
        <dbReference type="PROSITE-ProRule" id="PRU00161"/>
    </source>
</evidence>
<evidence type="ECO:0000256" key="4">
    <source>
        <dbReference type="SAM" id="MobiDB-lite"/>
    </source>
</evidence>
<evidence type="ECO:0000305" key="5"/>
<gene>
    <name type="primary">CBF5</name>
    <name type="ordered locus">KLLA0D04796g</name>
</gene>
<accession>O13473</accession>